<comment type="function">
    <text evidence="1">Catalyzes the formation of 4-diphosphocytidyl-2-C-methyl-D-erythritol from CTP and 2-C-methyl-D-erythritol 4-phosphate (MEP).</text>
</comment>
<comment type="catalytic activity">
    <reaction evidence="1">
        <text>2-C-methyl-D-erythritol 4-phosphate + CTP + H(+) = 4-CDP-2-C-methyl-D-erythritol + diphosphate</text>
        <dbReference type="Rhea" id="RHEA:13429"/>
        <dbReference type="ChEBI" id="CHEBI:15378"/>
        <dbReference type="ChEBI" id="CHEBI:33019"/>
        <dbReference type="ChEBI" id="CHEBI:37563"/>
        <dbReference type="ChEBI" id="CHEBI:57823"/>
        <dbReference type="ChEBI" id="CHEBI:58262"/>
        <dbReference type="EC" id="2.7.7.60"/>
    </reaction>
</comment>
<comment type="pathway">
    <text evidence="1">Isoprenoid biosynthesis; isopentenyl diphosphate biosynthesis via DXP pathway; isopentenyl diphosphate from 1-deoxy-D-xylulose 5-phosphate: step 2/6.</text>
</comment>
<comment type="similarity">
    <text evidence="1">Belongs to the IspD/TarI cytidylyltransferase family. IspD subfamily.</text>
</comment>
<organism>
    <name type="scientific">Xanthomonas euvesicatoria pv. vesicatoria (strain 85-10)</name>
    <name type="common">Xanthomonas campestris pv. vesicatoria</name>
    <dbReference type="NCBI Taxonomy" id="316273"/>
    <lineage>
        <taxon>Bacteria</taxon>
        <taxon>Pseudomonadati</taxon>
        <taxon>Pseudomonadota</taxon>
        <taxon>Gammaproteobacteria</taxon>
        <taxon>Lysobacterales</taxon>
        <taxon>Lysobacteraceae</taxon>
        <taxon>Xanthomonas</taxon>
    </lineage>
</organism>
<reference key="1">
    <citation type="journal article" date="2005" name="J. Bacteriol.">
        <title>Insights into genome plasticity and pathogenicity of the plant pathogenic Bacterium Xanthomonas campestris pv. vesicatoria revealed by the complete genome sequence.</title>
        <authorList>
            <person name="Thieme F."/>
            <person name="Koebnik R."/>
            <person name="Bekel T."/>
            <person name="Berger C."/>
            <person name="Boch J."/>
            <person name="Buettner D."/>
            <person name="Caldana C."/>
            <person name="Gaigalat L."/>
            <person name="Goesmann A."/>
            <person name="Kay S."/>
            <person name="Kirchner O."/>
            <person name="Lanz C."/>
            <person name="Linke B."/>
            <person name="McHardy A.C."/>
            <person name="Meyer F."/>
            <person name="Mittenhuber G."/>
            <person name="Nies D.H."/>
            <person name="Niesbach-Kloesgen U."/>
            <person name="Patschkowski T."/>
            <person name="Rueckert C."/>
            <person name="Rupp O."/>
            <person name="Schneiker S."/>
            <person name="Schuster S.C."/>
            <person name="Vorhoelter F.J."/>
            <person name="Weber E."/>
            <person name="Puehler A."/>
            <person name="Bonas U."/>
            <person name="Bartels D."/>
            <person name="Kaiser O."/>
        </authorList>
    </citation>
    <scope>NUCLEOTIDE SEQUENCE [LARGE SCALE GENOMIC DNA]</scope>
    <source>
        <strain>85-10</strain>
    </source>
</reference>
<dbReference type="EC" id="2.7.7.60" evidence="1"/>
<dbReference type="EMBL" id="AM039952">
    <property type="protein sequence ID" value="CAJ23431.1"/>
    <property type="molecule type" value="Genomic_DNA"/>
</dbReference>
<dbReference type="RefSeq" id="WP_011347101.1">
    <property type="nucleotide sequence ID" value="NZ_CP017190.1"/>
</dbReference>
<dbReference type="SMR" id="Q3BUS8"/>
<dbReference type="STRING" id="456327.BJD11_13775"/>
<dbReference type="GeneID" id="97510096"/>
<dbReference type="KEGG" id="xcv:XCV1754"/>
<dbReference type="eggNOG" id="COG1211">
    <property type="taxonomic scope" value="Bacteria"/>
</dbReference>
<dbReference type="HOGENOM" id="CLU_061281_3_1_6"/>
<dbReference type="UniPathway" id="UPA00056">
    <property type="reaction ID" value="UER00093"/>
</dbReference>
<dbReference type="Proteomes" id="UP000007069">
    <property type="component" value="Chromosome"/>
</dbReference>
<dbReference type="GO" id="GO:0050518">
    <property type="term" value="F:2-C-methyl-D-erythritol 4-phosphate cytidylyltransferase activity"/>
    <property type="evidence" value="ECO:0007669"/>
    <property type="project" value="UniProtKB-UniRule"/>
</dbReference>
<dbReference type="GO" id="GO:0019288">
    <property type="term" value="P:isopentenyl diphosphate biosynthetic process, methylerythritol 4-phosphate pathway"/>
    <property type="evidence" value="ECO:0007669"/>
    <property type="project" value="UniProtKB-UniRule"/>
</dbReference>
<dbReference type="CDD" id="cd02516">
    <property type="entry name" value="CDP-ME_synthetase"/>
    <property type="match status" value="1"/>
</dbReference>
<dbReference type="FunFam" id="3.90.550.10:FF:000003">
    <property type="entry name" value="2-C-methyl-D-erythritol 4-phosphate cytidylyltransferase"/>
    <property type="match status" value="1"/>
</dbReference>
<dbReference type="Gene3D" id="3.90.550.10">
    <property type="entry name" value="Spore Coat Polysaccharide Biosynthesis Protein SpsA, Chain A"/>
    <property type="match status" value="1"/>
</dbReference>
<dbReference type="HAMAP" id="MF_00108">
    <property type="entry name" value="IspD"/>
    <property type="match status" value="1"/>
</dbReference>
<dbReference type="InterPro" id="IPR001228">
    <property type="entry name" value="IspD"/>
</dbReference>
<dbReference type="InterPro" id="IPR034683">
    <property type="entry name" value="IspD/TarI"/>
</dbReference>
<dbReference type="InterPro" id="IPR050088">
    <property type="entry name" value="IspD/TarI_cytidylyltransf_bact"/>
</dbReference>
<dbReference type="InterPro" id="IPR018294">
    <property type="entry name" value="ISPD_synthase_CS"/>
</dbReference>
<dbReference type="InterPro" id="IPR029044">
    <property type="entry name" value="Nucleotide-diphossugar_trans"/>
</dbReference>
<dbReference type="NCBIfam" id="TIGR00453">
    <property type="entry name" value="ispD"/>
    <property type="match status" value="1"/>
</dbReference>
<dbReference type="PANTHER" id="PTHR32125">
    <property type="entry name" value="2-C-METHYL-D-ERYTHRITOL 4-PHOSPHATE CYTIDYLYLTRANSFERASE, CHLOROPLASTIC"/>
    <property type="match status" value="1"/>
</dbReference>
<dbReference type="PANTHER" id="PTHR32125:SF4">
    <property type="entry name" value="2-C-METHYL-D-ERYTHRITOL 4-PHOSPHATE CYTIDYLYLTRANSFERASE, CHLOROPLASTIC"/>
    <property type="match status" value="1"/>
</dbReference>
<dbReference type="Pfam" id="PF01128">
    <property type="entry name" value="IspD"/>
    <property type="match status" value="1"/>
</dbReference>
<dbReference type="SUPFAM" id="SSF53448">
    <property type="entry name" value="Nucleotide-diphospho-sugar transferases"/>
    <property type="match status" value="1"/>
</dbReference>
<dbReference type="PROSITE" id="PS01295">
    <property type="entry name" value="ISPD"/>
    <property type="match status" value="1"/>
</dbReference>
<feature type="chain" id="PRO_0000237836" description="2-C-methyl-D-erythritol 4-phosphate cytidylyltransferase">
    <location>
        <begin position="1"/>
        <end position="264"/>
    </location>
</feature>
<feature type="region of interest" description="Disordered" evidence="2">
    <location>
        <begin position="234"/>
        <end position="264"/>
    </location>
</feature>
<feature type="site" description="Transition state stabilizer" evidence="1">
    <location>
        <position position="17"/>
    </location>
</feature>
<feature type="site" description="Transition state stabilizer" evidence="1">
    <location>
        <position position="24"/>
    </location>
</feature>
<feature type="site" description="Positions MEP for the nucleophilic attack" evidence="1">
    <location>
        <position position="157"/>
    </location>
</feature>
<feature type="site" description="Positions MEP for the nucleophilic attack" evidence="1">
    <location>
        <position position="213"/>
    </location>
</feature>
<accession>Q3BUS8</accession>
<evidence type="ECO:0000255" key="1">
    <source>
        <dbReference type="HAMAP-Rule" id="MF_00108"/>
    </source>
</evidence>
<evidence type="ECO:0000256" key="2">
    <source>
        <dbReference type="SAM" id="MobiDB-lite"/>
    </source>
</evidence>
<proteinExistence type="inferred from homology"/>
<gene>
    <name evidence="1" type="primary">ispD</name>
    <name type="ordered locus">XCV1754</name>
</gene>
<protein>
    <recommendedName>
        <fullName evidence="1">2-C-methyl-D-erythritol 4-phosphate cytidylyltransferase</fullName>
        <ecNumber evidence="1">2.7.7.60</ecNumber>
    </recommendedName>
    <alternativeName>
        <fullName evidence="1">4-diphosphocytidyl-2C-methyl-D-erythritol synthase</fullName>
    </alternativeName>
    <alternativeName>
        <fullName evidence="1">MEP cytidylyltransferase</fullName>
        <shortName evidence="1">MCT</shortName>
    </alternativeName>
</protein>
<name>ISPD_XANE5</name>
<keyword id="KW-0414">Isoprene biosynthesis</keyword>
<keyword id="KW-0548">Nucleotidyltransferase</keyword>
<keyword id="KW-0808">Transferase</keyword>
<sequence>MTGSIWAIVPAAGRGTRFGGPLPKQYLPAGGQPLMAYTLAALAAHPALAGIMVAIAPGDADWPGWTAVQSTPVLTCLGGASRAASVLAGLLALPESVRADDFVLVHDAARPNLALADLDRLLEIGRGDPVGAILAAPVRDTLKRAGDDGGIDGTEPRERLWRALTPQLFRRHQLIRGLTEAAAAGVEVTDEAMAMERMGLRPLLVEGAEDNFKVTTPADLARFEFELVNRGLGARDPESAHPQSSVLASAFSGPGSRVSGPEEI</sequence>